<gene>
    <name evidence="1" type="primary">adk</name>
    <name type="ordered locus">CT1185</name>
</gene>
<comment type="function">
    <text evidence="1">Catalyzes the reversible transfer of the terminal phosphate group between ATP and AMP. Plays an important role in cellular energy homeostasis and in adenine nucleotide metabolism.</text>
</comment>
<comment type="catalytic activity">
    <reaction evidence="1">
        <text>AMP + ATP = 2 ADP</text>
        <dbReference type="Rhea" id="RHEA:12973"/>
        <dbReference type="ChEBI" id="CHEBI:30616"/>
        <dbReference type="ChEBI" id="CHEBI:456215"/>
        <dbReference type="ChEBI" id="CHEBI:456216"/>
        <dbReference type="EC" id="2.7.4.3"/>
    </reaction>
</comment>
<comment type="pathway">
    <text evidence="1">Purine metabolism; AMP biosynthesis via salvage pathway; AMP from ADP: step 1/1.</text>
</comment>
<comment type="subunit">
    <text evidence="1">Monomer.</text>
</comment>
<comment type="subcellular location">
    <subcellularLocation>
        <location evidence="1">Cytoplasm</location>
    </subcellularLocation>
</comment>
<comment type="domain">
    <text evidence="1">Consists of three domains, a large central CORE domain and two small peripheral domains, NMPbind and LID, which undergo movements during catalysis. The LID domain closes over the site of phosphoryl transfer upon ATP binding. Assembling and dissambling the active center during each catalytic cycle provides an effective means to prevent ATP hydrolysis.</text>
</comment>
<comment type="similarity">
    <text evidence="1">Belongs to the adenylate kinase family.</text>
</comment>
<proteinExistence type="inferred from homology"/>
<organism>
    <name type="scientific">Chlorobaculum tepidum (strain ATCC 49652 / DSM 12025 / NBRC 103806 / TLS)</name>
    <name type="common">Chlorobium tepidum</name>
    <dbReference type="NCBI Taxonomy" id="194439"/>
    <lineage>
        <taxon>Bacteria</taxon>
        <taxon>Pseudomonadati</taxon>
        <taxon>Chlorobiota</taxon>
        <taxon>Chlorobiia</taxon>
        <taxon>Chlorobiales</taxon>
        <taxon>Chlorobiaceae</taxon>
        <taxon>Chlorobaculum</taxon>
    </lineage>
</organism>
<feature type="chain" id="PRO_0000158754" description="Adenylate kinase">
    <location>
        <begin position="1"/>
        <end position="218"/>
    </location>
</feature>
<feature type="region of interest" description="NMP" evidence="1">
    <location>
        <begin position="30"/>
        <end position="59"/>
    </location>
</feature>
<feature type="region of interest" description="LID" evidence="1">
    <location>
        <begin position="122"/>
        <end position="159"/>
    </location>
</feature>
<feature type="binding site" evidence="1">
    <location>
        <begin position="10"/>
        <end position="15"/>
    </location>
    <ligand>
        <name>ATP</name>
        <dbReference type="ChEBI" id="CHEBI:30616"/>
    </ligand>
</feature>
<feature type="binding site" evidence="1">
    <location>
        <position position="31"/>
    </location>
    <ligand>
        <name>AMP</name>
        <dbReference type="ChEBI" id="CHEBI:456215"/>
    </ligand>
</feature>
<feature type="binding site" evidence="1">
    <location>
        <position position="36"/>
    </location>
    <ligand>
        <name>AMP</name>
        <dbReference type="ChEBI" id="CHEBI:456215"/>
    </ligand>
</feature>
<feature type="binding site" evidence="1">
    <location>
        <begin position="57"/>
        <end position="59"/>
    </location>
    <ligand>
        <name>AMP</name>
        <dbReference type="ChEBI" id="CHEBI:456215"/>
    </ligand>
</feature>
<feature type="binding site" evidence="1">
    <location>
        <begin position="85"/>
        <end position="88"/>
    </location>
    <ligand>
        <name>AMP</name>
        <dbReference type="ChEBI" id="CHEBI:456215"/>
    </ligand>
</feature>
<feature type="binding site" evidence="1">
    <location>
        <position position="92"/>
    </location>
    <ligand>
        <name>AMP</name>
        <dbReference type="ChEBI" id="CHEBI:456215"/>
    </ligand>
</feature>
<feature type="binding site" evidence="1">
    <location>
        <position position="123"/>
    </location>
    <ligand>
        <name>ATP</name>
        <dbReference type="ChEBI" id="CHEBI:30616"/>
    </ligand>
</feature>
<feature type="binding site" evidence="1">
    <location>
        <begin position="132"/>
        <end position="133"/>
    </location>
    <ligand>
        <name>ATP</name>
        <dbReference type="ChEBI" id="CHEBI:30616"/>
    </ligand>
</feature>
<feature type="binding site" evidence="1">
    <location>
        <position position="156"/>
    </location>
    <ligand>
        <name>AMP</name>
        <dbReference type="ChEBI" id="CHEBI:456215"/>
    </ligand>
</feature>
<feature type="binding site" evidence="1">
    <location>
        <position position="167"/>
    </location>
    <ligand>
        <name>AMP</name>
        <dbReference type="ChEBI" id="CHEBI:456215"/>
    </ligand>
</feature>
<feature type="binding site" evidence="1">
    <location>
        <position position="203"/>
    </location>
    <ligand>
        <name>ATP</name>
        <dbReference type="ChEBI" id="CHEBI:30616"/>
    </ligand>
</feature>
<sequence length="218" mass="23621">MRIILLGAPGAGKGTQAQYISEAFGIPQISTGDMLRAAVKAATPLGLAAKKIMDEGGLVPDDLIISLVKERIAQPDCANGCLFDGFPRTLAQAEALRAGGIRIDHIIEMNVPDEEIIKRMSGRRVHLASGRTYHVTFNPPAVPDKDDLTGEPLVQRNDDCEETVRKRLKAYHELTEPLVGYYRNLSMNGSADAPKYSRIAGIGTVEQIKDEIIATLNG</sequence>
<reference key="1">
    <citation type="journal article" date="2002" name="Proc. Natl. Acad. Sci. U.S.A.">
        <title>The complete genome sequence of Chlorobium tepidum TLS, a photosynthetic, anaerobic, green-sulfur bacterium.</title>
        <authorList>
            <person name="Eisen J.A."/>
            <person name="Nelson K.E."/>
            <person name="Paulsen I.T."/>
            <person name="Heidelberg J.F."/>
            <person name="Wu M."/>
            <person name="Dodson R.J."/>
            <person name="DeBoy R.T."/>
            <person name="Gwinn M.L."/>
            <person name="Nelson W.C."/>
            <person name="Haft D.H."/>
            <person name="Hickey E.K."/>
            <person name="Peterson J.D."/>
            <person name="Durkin A.S."/>
            <person name="Kolonay J.F."/>
            <person name="Yang F."/>
            <person name="Holt I.E."/>
            <person name="Umayam L.A."/>
            <person name="Mason T.M."/>
            <person name="Brenner M."/>
            <person name="Shea T.P."/>
            <person name="Parksey D.S."/>
            <person name="Nierman W.C."/>
            <person name="Feldblyum T.V."/>
            <person name="Hansen C.L."/>
            <person name="Craven M.B."/>
            <person name="Radune D."/>
            <person name="Vamathevan J.J."/>
            <person name="Khouri H.M."/>
            <person name="White O."/>
            <person name="Gruber T.M."/>
            <person name="Ketchum K.A."/>
            <person name="Venter J.C."/>
            <person name="Tettelin H."/>
            <person name="Bryant D.A."/>
            <person name="Fraser C.M."/>
        </authorList>
    </citation>
    <scope>NUCLEOTIDE SEQUENCE [LARGE SCALE GENOMIC DNA]</scope>
    <source>
        <strain>ATCC 49652 / DSM 12025 / NBRC 103806 / TLS</strain>
    </source>
</reference>
<dbReference type="EC" id="2.7.4.3" evidence="1"/>
<dbReference type="EMBL" id="AE006470">
    <property type="protein sequence ID" value="AAM72418.1"/>
    <property type="molecule type" value="Genomic_DNA"/>
</dbReference>
<dbReference type="RefSeq" id="NP_662076.1">
    <property type="nucleotide sequence ID" value="NC_002932.3"/>
</dbReference>
<dbReference type="RefSeq" id="WP_010932857.1">
    <property type="nucleotide sequence ID" value="NC_002932.3"/>
</dbReference>
<dbReference type="SMR" id="Q8KD69"/>
<dbReference type="STRING" id="194439.CT1185"/>
<dbReference type="EnsemblBacteria" id="AAM72418">
    <property type="protein sequence ID" value="AAM72418"/>
    <property type="gene ID" value="CT1185"/>
</dbReference>
<dbReference type="KEGG" id="cte:CT1185"/>
<dbReference type="PATRIC" id="fig|194439.7.peg.1080"/>
<dbReference type="eggNOG" id="COG0563">
    <property type="taxonomic scope" value="Bacteria"/>
</dbReference>
<dbReference type="HOGENOM" id="CLU_032354_1_2_10"/>
<dbReference type="OrthoDB" id="9805030at2"/>
<dbReference type="UniPathway" id="UPA00588">
    <property type="reaction ID" value="UER00649"/>
</dbReference>
<dbReference type="Proteomes" id="UP000001007">
    <property type="component" value="Chromosome"/>
</dbReference>
<dbReference type="GO" id="GO:0005737">
    <property type="term" value="C:cytoplasm"/>
    <property type="evidence" value="ECO:0007669"/>
    <property type="project" value="UniProtKB-SubCell"/>
</dbReference>
<dbReference type="GO" id="GO:0004017">
    <property type="term" value="F:adenylate kinase activity"/>
    <property type="evidence" value="ECO:0007669"/>
    <property type="project" value="UniProtKB-UniRule"/>
</dbReference>
<dbReference type="GO" id="GO:0005524">
    <property type="term" value="F:ATP binding"/>
    <property type="evidence" value="ECO:0007669"/>
    <property type="project" value="UniProtKB-UniRule"/>
</dbReference>
<dbReference type="GO" id="GO:0044209">
    <property type="term" value="P:AMP salvage"/>
    <property type="evidence" value="ECO:0007669"/>
    <property type="project" value="UniProtKB-UniRule"/>
</dbReference>
<dbReference type="CDD" id="cd01428">
    <property type="entry name" value="ADK"/>
    <property type="match status" value="1"/>
</dbReference>
<dbReference type="FunFam" id="3.40.50.300:FF:000106">
    <property type="entry name" value="Adenylate kinase mitochondrial"/>
    <property type="match status" value="1"/>
</dbReference>
<dbReference type="Gene3D" id="3.40.50.300">
    <property type="entry name" value="P-loop containing nucleotide triphosphate hydrolases"/>
    <property type="match status" value="1"/>
</dbReference>
<dbReference type="HAMAP" id="MF_00235">
    <property type="entry name" value="Adenylate_kinase_Adk"/>
    <property type="match status" value="1"/>
</dbReference>
<dbReference type="InterPro" id="IPR006259">
    <property type="entry name" value="Adenyl_kin_sub"/>
</dbReference>
<dbReference type="InterPro" id="IPR000850">
    <property type="entry name" value="Adenylat/UMP-CMP_kin"/>
</dbReference>
<dbReference type="InterPro" id="IPR033690">
    <property type="entry name" value="Adenylat_kinase_CS"/>
</dbReference>
<dbReference type="InterPro" id="IPR007862">
    <property type="entry name" value="Adenylate_kinase_lid-dom"/>
</dbReference>
<dbReference type="InterPro" id="IPR027417">
    <property type="entry name" value="P-loop_NTPase"/>
</dbReference>
<dbReference type="NCBIfam" id="TIGR01351">
    <property type="entry name" value="adk"/>
    <property type="match status" value="1"/>
</dbReference>
<dbReference type="NCBIfam" id="NF001379">
    <property type="entry name" value="PRK00279.1-1"/>
    <property type="match status" value="1"/>
</dbReference>
<dbReference type="NCBIfam" id="NF001380">
    <property type="entry name" value="PRK00279.1-2"/>
    <property type="match status" value="1"/>
</dbReference>
<dbReference type="NCBIfam" id="NF001381">
    <property type="entry name" value="PRK00279.1-3"/>
    <property type="match status" value="1"/>
</dbReference>
<dbReference type="NCBIfam" id="NF011100">
    <property type="entry name" value="PRK14527.1"/>
    <property type="match status" value="1"/>
</dbReference>
<dbReference type="PANTHER" id="PTHR23359">
    <property type="entry name" value="NUCLEOTIDE KINASE"/>
    <property type="match status" value="1"/>
</dbReference>
<dbReference type="Pfam" id="PF00406">
    <property type="entry name" value="ADK"/>
    <property type="match status" value="1"/>
</dbReference>
<dbReference type="Pfam" id="PF05191">
    <property type="entry name" value="ADK_lid"/>
    <property type="match status" value="1"/>
</dbReference>
<dbReference type="PRINTS" id="PR00094">
    <property type="entry name" value="ADENYLTKNASE"/>
</dbReference>
<dbReference type="SUPFAM" id="SSF52540">
    <property type="entry name" value="P-loop containing nucleoside triphosphate hydrolases"/>
    <property type="match status" value="1"/>
</dbReference>
<dbReference type="PROSITE" id="PS00113">
    <property type="entry name" value="ADENYLATE_KINASE"/>
    <property type="match status" value="1"/>
</dbReference>
<protein>
    <recommendedName>
        <fullName evidence="1">Adenylate kinase</fullName>
        <shortName evidence="1">AK</shortName>
        <ecNumber evidence="1">2.7.4.3</ecNumber>
    </recommendedName>
    <alternativeName>
        <fullName evidence="1">ATP-AMP transphosphorylase</fullName>
    </alternativeName>
    <alternativeName>
        <fullName evidence="1">ATP:AMP phosphotransferase</fullName>
    </alternativeName>
    <alternativeName>
        <fullName evidence="1">Adenylate monophosphate kinase</fullName>
    </alternativeName>
</protein>
<keyword id="KW-0067">ATP-binding</keyword>
<keyword id="KW-0963">Cytoplasm</keyword>
<keyword id="KW-0418">Kinase</keyword>
<keyword id="KW-0545">Nucleotide biosynthesis</keyword>
<keyword id="KW-0547">Nucleotide-binding</keyword>
<keyword id="KW-1185">Reference proteome</keyword>
<keyword id="KW-0808">Transferase</keyword>
<name>KAD_CHLTE</name>
<evidence type="ECO:0000255" key="1">
    <source>
        <dbReference type="HAMAP-Rule" id="MF_00235"/>
    </source>
</evidence>
<accession>Q8KD69</accession>